<accession>Q8NCX0</accession>
<accession>Q6P5U6</accession>
<accession>Q6P663</accession>
<accession>Q8N8V5</accession>
<feature type="chain" id="PRO_0000328984" description="Coiled-coil domain-containing protein 150">
    <location>
        <begin position="1"/>
        <end position="1101"/>
    </location>
</feature>
<feature type="region of interest" description="Disordered" evidence="2">
    <location>
        <begin position="1055"/>
        <end position="1101"/>
    </location>
</feature>
<feature type="coiled-coil region" evidence="1">
    <location>
        <begin position="106"/>
        <end position="299"/>
    </location>
</feature>
<feature type="coiled-coil region" evidence="1">
    <location>
        <begin position="398"/>
        <end position="680"/>
    </location>
</feature>
<feature type="coiled-coil region" evidence="1">
    <location>
        <begin position="712"/>
        <end position="940"/>
    </location>
</feature>
<feature type="coiled-coil region" evidence="1">
    <location>
        <begin position="970"/>
        <end position="1033"/>
    </location>
</feature>
<feature type="compositionally biased region" description="Basic and acidic residues" evidence="2">
    <location>
        <begin position="1055"/>
        <end position="1071"/>
    </location>
</feature>
<feature type="splice variant" id="VSP_032872" description="In isoform 3 and isoform 4." evidence="3 4">
    <location>
        <begin position="1"/>
        <end position="685"/>
    </location>
</feature>
<feature type="splice variant" id="VSP_032873" description="In isoform 2." evidence="4 5">
    <location>
        <begin position="1"/>
        <end position="513"/>
    </location>
</feature>
<feature type="splice variant" id="VSP_032874" description="In isoform 2." evidence="4 5">
    <original>QTLEEENKHLADQMASLELQQVTSDYHGLAQQKVEKITESKNKLAYENGKLQIKVKQLEEQVQSFTDTSLQNDHLRKMNKYLQTKYAQANSELSAKRVHLQQADAHLKE</original>
    <variation>MPLRKRKSPERTASSKSPEISRSHVNSIKERTSSVGLPSVIPNSTRRVSFAPNLPSMKTSQDIGDSRISLKTLLNAIKTMEGRLEGKIEILASRPLINDESPNFLKQDS</variation>
    <location>
        <begin position="514"/>
        <end position="622"/>
    </location>
</feature>
<feature type="splice variant" id="VSP_032875" description="In isoform 4." evidence="3">
    <original>L</original>
    <variation>V</variation>
    <location>
        <position position="853"/>
    </location>
</feature>
<feature type="splice variant" id="VSP_032876" description="In isoform 4." evidence="3">
    <location>
        <begin position="854"/>
        <end position="1101"/>
    </location>
</feature>
<feature type="splice variant" id="VSP_032877" description="In isoform 2 and isoform 3." evidence="4 5">
    <original>QIEKELKQMELIK</original>
    <variation>VVWETSSHFLDTL</variation>
    <location>
        <begin position="918"/>
        <end position="930"/>
    </location>
</feature>
<feature type="splice variant" id="VSP_032878" description="In isoform 2 and isoform 3." evidence="4 5">
    <location>
        <begin position="931"/>
        <end position="1101"/>
    </location>
</feature>
<feature type="sequence variant" id="VAR_042600" description="In dbSNP:rs34133636.">
    <original>E</original>
    <variation>K</variation>
    <location>
        <position position="156"/>
    </location>
</feature>
<feature type="sequence conflict" description="In Ref. 5; AAH62658." evidence="6" ref="5">
    <original>M</original>
    <variation>V</variation>
    <location>
        <position position="746"/>
    </location>
</feature>
<feature type="sequence conflict" description="In Ref. 5; AAH62658." evidence="6" ref="5">
    <original>T</original>
    <variation>A</variation>
    <location>
        <position position="841"/>
    </location>
</feature>
<sequence>MDCKVHMETTVSRPVLSPTHINATASETFTVLQQRMRIVEEQTSSLRDDLIMLDFGEKRGYLEAPDCLEDLDSQKVISPIQNEAICAGKTDILWKNCEFLVNRMCRLESLMQSLKMNIFRLQTEKDLNPQKTAFLKDRLNAIQEEHSKDLKLLHLEVMNLRQQLRAVKEEEDKAQDEVQRLTATLKIASQTKKNAAIIEEELKTTKRKMNLKIQELRRQLAQEKYLRESLEKSASAMLLKIQEMGSTVEVERKQVHILQQNCIALRDSIQSAQELLAQEQKKKEELEIATSQLKSDLTSRDDLISKLVEENKNLQISFNKEHEENAYLRSEIMSLHEASEKAQVLNDQLTKKCSELSCMLQTVTMEKARIIADHQAILQVEQKMMTQTFQEQNLLLDAAHASITNELQTVQNEKTQLQAHLDHLILEHNQCIQKAQDAEKRTAVQKELLESTIARLRGELEASMQEKKSLLEEKERFQREVNKTEKEIVQERCNLEKELAKNKVDINTLTHNLQTLEEENKHLADQMASLELQQVTSDYHGLAQQKVEKITESKNKLAYENGKLQIKVKQLEEQVQSFTDTSLQNDHLRKMNKYLQTKYAQANSELSAKRVHLQQADAHLKEVKSILERSKEELSRTVKCRNAALKESQKLKEDLEAVEDRENKKVGNFQRQLAEAKEDNCKVTIMLENVLASHSKMQGALEKVQIELGRRDSEIAGLKKERDLNQQRVQKLEAEVDQWQARMLVMEDQHNSEIESLQKALGVAREDNRKLAMSLEQALQTNNHLQTKLDHIQEQLESKELERQNLETFKDRMTEESKVEAELHAERIEALRKQFQTERETTKKVAQREVAELKKALDEANFRSVEVSRTNRELRQKLAELEKILESNKEKIKNQKTQIKLHLSAKANNAQNIERMKQIEKELKQMELIKDQYQKKNYEQSLSIQRFVCEMTNLQKEMQMLAKSQYDASVRNKQQELHLEAERKIRQELENRCQELEETVRHLKKCKEATENTLKEASVESEQITANLEEAHRWFKHRFDGLQLELTKNRLQRPSGEDRWQEKDQDVKHDVMSNQSVLHRWERKQNLRPMPKKYHSEVQRK</sequence>
<name>CC150_HUMAN</name>
<keyword id="KW-0025">Alternative splicing</keyword>
<keyword id="KW-0175">Coiled coil</keyword>
<keyword id="KW-1267">Proteomics identification</keyword>
<keyword id="KW-1185">Reference proteome</keyword>
<protein>
    <recommendedName>
        <fullName>Coiled-coil domain-containing protein 150</fullName>
    </recommendedName>
</protein>
<organism>
    <name type="scientific">Homo sapiens</name>
    <name type="common">Human</name>
    <dbReference type="NCBI Taxonomy" id="9606"/>
    <lineage>
        <taxon>Eukaryota</taxon>
        <taxon>Metazoa</taxon>
        <taxon>Chordata</taxon>
        <taxon>Craniata</taxon>
        <taxon>Vertebrata</taxon>
        <taxon>Euteleostomi</taxon>
        <taxon>Mammalia</taxon>
        <taxon>Eutheria</taxon>
        <taxon>Euarchontoglires</taxon>
        <taxon>Primates</taxon>
        <taxon>Haplorrhini</taxon>
        <taxon>Catarrhini</taxon>
        <taxon>Hominidae</taxon>
        <taxon>Homo</taxon>
    </lineage>
</organism>
<evidence type="ECO:0000255" key="1"/>
<evidence type="ECO:0000256" key="2">
    <source>
        <dbReference type="SAM" id="MobiDB-lite"/>
    </source>
</evidence>
<evidence type="ECO:0000303" key="3">
    <source>
    </source>
</evidence>
<evidence type="ECO:0000303" key="4">
    <source>
    </source>
</evidence>
<evidence type="ECO:0000303" key="5">
    <source>
    </source>
</evidence>
<evidence type="ECO:0000305" key="6"/>
<proteinExistence type="evidence at protein level"/>
<reference key="1">
    <citation type="journal article" date="2004" name="Nat. Genet.">
        <title>Complete sequencing and characterization of 21,243 full-length human cDNAs.</title>
        <authorList>
            <person name="Ota T."/>
            <person name="Suzuki Y."/>
            <person name="Nishikawa T."/>
            <person name="Otsuki T."/>
            <person name="Sugiyama T."/>
            <person name="Irie R."/>
            <person name="Wakamatsu A."/>
            <person name="Hayashi K."/>
            <person name="Sato H."/>
            <person name="Nagai K."/>
            <person name="Kimura K."/>
            <person name="Makita H."/>
            <person name="Sekine M."/>
            <person name="Obayashi M."/>
            <person name="Nishi T."/>
            <person name="Shibahara T."/>
            <person name="Tanaka T."/>
            <person name="Ishii S."/>
            <person name="Yamamoto J."/>
            <person name="Saito K."/>
            <person name="Kawai Y."/>
            <person name="Isono Y."/>
            <person name="Nakamura Y."/>
            <person name="Nagahari K."/>
            <person name="Murakami K."/>
            <person name="Yasuda T."/>
            <person name="Iwayanagi T."/>
            <person name="Wagatsuma M."/>
            <person name="Shiratori A."/>
            <person name="Sudo H."/>
            <person name="Hosoiri T."/>
            <person name="Kaku Y."/>
            <person name="Kodaira H."/>
            <person name="Kondo H."/>
            <person name="Sugawara M."/>
            <person name="Takahashi M."/>
            <person name="Kanda K."/>
            <person name="Yokoi T."/>
            <person name="Furuya T."/>
            <person name="Kikkawa E."/>
            <person name="Omura Y."/>
            <person name="Abe K."/>
            <person name="Kamihara K."/>
            <person name="Katsuta N."/>
            <person name="Sato K."/>
            <person name="Tanikawa M."/>
            <person name="Yamazaki M."/>
            <person name="Ninomiya K."/>
            <person name="Ishibashi T."/>
            <person name="Yamashita H."/>
            <person name="Murakawa K."/>
            <person name="Fujimori K."/>
            <person name="Tanai H."/>
            <person name="Kimata M."/>
            <person name="Watanabe M."/>
            <person name="Hiraoka S."/>
            <person name="Chiba Y."/>
            <person name="Ishida S."/>
            <person name="Ono Y."/>
            <person name="Takiguchi S."/>
            <person name="Watanabe S."/>
            <person name="Yosida M."/>
            <person name="Hotuta T."/>
            <person name="Kusano J."/>
            <person name="Kanehori K."/>
            <person name="Takahashi-Fujii A."/>
            <person name="Hara H."/>
            <person name="Tanase T.-O."/>
            <person name="Nomura Y."/>
            <person name="Togiya S."/>
            <person name="Komai F."/>
            <person name="Hara R."/>
            <person name="Takeuchi K."/>
            <person name="Arita M."/>
            <person name="Imose N."/>
            <person name="Musashino K."/>
            <person name="Yuuki H."/>
            <person name="Oshima A."/>
            <person name="Sasaki N."/>
            <person name="Aotsuka S."/>
            <person name="Yoshikawa Y."/>
            <person name="Matsunawa H."/>
            <person name="Ichihara T."/>
            <person name="Shiohata N."/>
            <person name="Sano S."/>
            <person name="Moriya S."/>
            <person name="Momiyama H."/>
            <person name="Satoh N."/>
            <person name="Takami S."/>
            <person name="Terashima Y."/>
            <person name="Suzuki O."/>
            <person name="Nakagawa S."/>
            <person name="Senoh A."/>
            <person name="Mizoguchi H."/>
            <person name="Goto Y."/>
            <person name="Shimizu F."/>
            <person name="Wakebe H."/>
            <person name="Hishigaki H."/>
            <person name="Watanabe T."/>
            <person name="Sugiyama A."/>
            <person name="Takemoto M."/>
            <person name="Kawakami B."/>
            <person name="Yamazaki M."/>
            <person name="Watanabe K."/>
            <person name="Kumagai A."/>
            <person name="Itakura S."/>
            <person name="Fukuzumi Y."/>
            <person name="Fujimori Y."/>
            <person name="Komiyama M."/>
            <person name="Tashiro H."/>
            <person name="Tanigami A."/>
            <person name="Fujiwara T."/>
            <person name="Ono T."/>
            <person name="Yamada K."/>
            <person name="Fujii Y."/>
            <person name="Ozaki K."/>
            <person name="Hirao M."/>
            <person name="Ohmori Y."/>
            <person name="Kawabata A."/>
            <person name="Hikiji T."/>
            <person name="Kobatake N."/>
            <person name="Inagaki H."/>
            <person name="Ikema Y."/>
            <person name="Okamoto S."/>
            <person name="Okitani R."/>
            <person name="Kawakami T."/>
            <person name="Noguchi S."/>
            <person name="Itoh T."/>
            <person name="Shigeta K."/>
            <person name="Senba T."/>
            <person name="Matsumura K."/>
            <person name="Nakajima Y."/>
            <person name="Mizuno T."/>
            <person name="Morinaga M."/>
            <person name="Sasaki M."/>
            <person name="Togashi T."/>
            <person name="Oyama M."/>
            <person name="Hata H."/>
            <person name="Watanabe M."/>
            <person name="Komatsu T."/>
            <person name="Mizushima-Sugano J."/>
            <person name="Satoh T."/>
            <person name="Shirai Y."/>
            <person name="Takahashi Y."/>
            <person name="Nakagawa K."/>
            <person name="Okumura K."/>
            <person name="Nagase T."/>
            <person name="Nomura N."/>
            <person name="Kikuchi H."/>
            <person name="Masuho Y."/>
            <person name="Yamashita R."/>
            <person name="Nakai K."/>
            <person name="Yada T."/>
            <person name="Nakamura Y."/>
            <person name="Ohara O."/>
            <person name="Isogai T."/>
            <person name="Sugano S."/>
        </authorList>
    </citation>
    <scope>NUCLEOTIDE SEQUENCE [LARGE SCALE MRNA] (ISOFORM 4)</scope>
    <source>
        <tissue>Liver</tissue>
    </source>
</reference>
<reference key="2">
    <citation type="journal article" date="2007" name="BMC Genomics">
        <title>The full-ORF clone resource of the German cDNA consortium.</title>
        <authorList>
            <person name="Bechtel S."/>
            <person name="Rosenfelder H."/>
            <person name="Duda A."/>
            <person name="Schmidt C.P."/>
            <person name="Ernst U."/>
            <person name="Wellenreuther R."/>
            <person name="Mehrle A."/>
            <person name="Schuster C."/>
            <person name="Bahr A."/>
            <person name="Bloecker H."/>
            <person name="Heubner D."/>
            <person name="Hoerlein A."/>
            <person name="Michel G."/>
            <person name="Wedler H."/>
            <person name="Koehrer K."/>
            <person name="Ottenwaelder B."/>
            <person name="Poustka A."/>
            <person name="Wiemann S."/>
            <person name="Schupp I."/>
        </authorList>
    </citation>
    <scope>NUCLEOTIDE SEQUENCE [LARGE SCALE MRNA] (ISOFORM 2)</scope>
    <source>
        <tissue>Testis</tissue>
    </source>
</reference>
<reference key="3">
    <citation type="journal article" date="2005" name="Nature">
        <title>Generation and annotation of the DNA sequences of human chromosomes 2 and 4.</title>
        <authorList>
            <person name="Hillier L.W."/>
            <person name="Graves T.A."/>
            <person name="Fulton R.S."/>
            <person name="Fulton L.A."/>
            <person name="Pepin K.H."/>
            <person name="Minx P."/>
            <person name="Wagner-McPherson C."/>
            <person name="Layman D."/>
            <person name="Wylie K."/>
            <person name="Sekhon M."/>
            <person name="Becker M.C."/>
            <person name="Fewell G.A."/>
            <person name="Delehaunty K.D."/>
            <person name="Miner T.L."/>
            <person name="Nash W.E."/>
            <person name="Kremitzki C."/>
            <person name="Oddy L."/>
            <person name="Du H."/>
            <person name="Sun H."/>
            <person name="Bradshaw-Cordum H."/>
            <person name="Ali J."/>
            <person name="Carter J."/>
            <person name="Cordes M."/>
            <person name="Harris A."/>
            <person name="Isak A."/>
            <person name="van Brunt A."/>
            <person name="Nguyen C."/>
            <person name="Du F."/>
            <person name="Courtney L."/>
            <person name="Kalicki J."/>
            <person name="Ozersky P."/>
            <person name="Abbott S."/>
            <person name="Armstrong J."/>
            <person name="Belter E.A."/>
            <person name="Caruso L."/>
            <person name="Cedroni M."/>
            <person name="Cotton M."/>
            <person name="Davidson T."/>
            <person name="Desai A."/>
            <person name="Elliott G."/>
            <person name="Erb T."/>
            <person name="Fronick C."/>
            <person name="Gaige T."/>
            <person name="Haakenson W."/>
            <person name="Haglund K."/>
            <person name="Holmes A."/>
            <person name="Harkins R."/>
            <person name="Kim K."/>
            <person name="Kruchowski S.S."/>
            <person name="Strong C.M."/>
            <person name="Grewal N."/>
            <person name="Goyea E."/>
            <person name="Hou S."/>
            <person name="Levy A."/>
            <person name="Martinka S."/>
            <person name="Mead K."/>
            <person name="McLellan M.D."/>
            <person name="Meyer R."/>
            <person name="Randall-Maher J."/>
            <person name="Tomlinson C."/>
            <person name="Dauphin-Kohlberg S."/>
            <person name="Kozlowicz-Reilly A."/>
            <person name="Shah N."/>
            <person name="Swearengen-Shahid S."/>
            <person name="Snider J."/>
            <person name="Strong J.T."/>
            <person name="Thompson J."/>
            <person name="Yoakum M."/>
            <person name="Leonard S."/>
            <person name="Pearman C."/>
            <person name="Trani L."/>
            <person name="Radionenko M."/>
            <person name="Waligorski J.E."/>
            <person name="Wang C."/>
            <person name="Rock S.M."/>
            <person name="Tin-Wollam A.-M."/>
            <person name="Maupin R."/>
            <person name="Latreille P."/>
            <person name="Wendl M.C."/>
            <person name="Yang S.-P."/>
            <person name="Pohl C."/>
            <person name="Wallis J.W."/>
            <person name="Spieth J."/>
            <person name="Bieri T.A."/>
            <person name="Berkowicz N."/>
            <person name="Nelson J.O."/>
            <person name="Osborne J."/>
            <person name="Ding L."/>
            <person name="Meyer R."/>
            <person name="Sabo A."/>
            <person name="Shotland Y."/>
            <person name="Sinha P."/>
            <person name="Wohldmann P.E."/>
            <person name="Cook L.L."/>
            <person name="Hickenbotham M.T."/>
            <person name="Eldred J."/>
            <person name="Williams D."/>
            <person name="Jones T.A."/>
            <person name="She X."/>
            <person name="Ciccarelli F.D."/>
            <person name="Izaurralde E."/>
            <person name="Taylor J."/>
            <person name="Schmutz J."/>
            <person name="Myers R.M."/>
            <person name="Cox D.R."/>
            <person name="Huang X."/>
            <person name="McPherson J.D."/>
            <person name="Mardis E.R."/>
            <person name="Clifton S.W."/>
            <person name="Warren W.C."/>
            <person name="Chinwalla A.T."/>
            <person name="Eddy S.R."/>
            <person name="Marra M.A."/>
            <person name="Ovcharenko I."/>
            <person name="Furey T.S."/>
            <person name="Miller W."/>
            <person name="Eichler E.E."/>
            <person name="Bork P."/>
            <person name="Suyama M."/>
            <person name="Torrents D."/>
            <person name="Waterston R.H."/>
            <person name="Wilson R.K."/>
        </authorList>
    </citation>
    <scope>NUCLEOTIDE SEQUENCE [LARGE SCALE GENOMIC DNA]</scope>
</reference>
<reference key="4">
    <citation type="submission" date="2005-07" db="EMBL/GenBank/DDBJ databases">
        <authorList>
            <person name="Mural R.J."/>
            <person name="Istrail S."/>
            <person name="Sutton G.G."/>
            <person name="Florea L."/>
            <person name="Halpern A.L."/>
            <person name="Mobarry C.M."/>
            <person name="Lippert R."/>
            <person name="Walenz B."/>
            <person name="Shatkay H."/>
            <person name="Dew I."/>
            <person name="Miller J.R."/>
            <person name="Flanigan M.J."/>
            <person name="Edwards N.J."/>
            <person name="Bolanos R."/>
            <person name="Fasulo D."/>
            <person name="Halldorsson B.V."/>
            <person name="Hannenhalli S."/>
            <person name="Turner R."/>
            <person name="Yooseph S."/>
            <person name="Lu F."/>
            <person name="Nusskern D.R."/>
            <person name="Shue B.C."/>
            <person name="Zheng X.H."/>
            <person name="Zhong F."/>
            <person name="Delcher A.L."/>
            <person name="Huson D.H."/>
            <person name="Kravitz S.A."/>
            <person name="Mouchard L."/>
            <person name="Reinert K."/>
            <person name="Remington K.A."/>
            <person name="Clark A.G."/>
            <person name="Waterman M.S."/>
            <person name="Eichler E.E."/>
            <person name="Adams M.D."/>
            <person name="Hunkapiller M.W."/>
            <person name="Myers E.W."/>
            <person name="Venter J.C."/>
        </authorList>
    </citation>
    <scope>NUCLEOTIDE SEQUENCE [LARGE SCALE GENOMIC DNA]</scope>
</reference>
<reference key="5">
    <citation type="journal article" date="2004" name="Genome Res.">
        <title>The status, quality, and expansion of the NIH full-length cDNA project: the Mammalian Gene Collection (MGC).</title>
        <authorList>
            <consortium name="The MGC Project Team"/>
        </authorList>
    </citation>
    <scope>NUCLEOTIDE SEQUENCE [LARGE SCALE MRNA] (ISOFORM 3)</scope>
    <scope>NUCLEOTIDE SEQUENCE [LARGE SCALE MRNA] OF 1-888 (ISOFORM 2)</scope>
    <source>
        <tissue>Kidney</tissue>
        <tissue>Testis</tissue>
    </source>
</reference>
<comment type="interaction">
    <interactant intactId="EBI-10269342">
        <id>Q8NCX0</id>
    </interactant>
    <interactant intactId="EBI-618309">
        <id>Q08379</id>
        <label>GOLGA2</label>
    </interactant>
    <organismsDiffer>false</organismsDiffer>
    <experiments>3</experiments>
</comment>
<comment type="interaction">
    <interactant intactId="EBI-10269342">
        <id>Q8NCX0</id>
    </interactant>
    <interactant intactId="EBI-347978">
        <id>P37198</id>
        <label>NUP62</label>
    </interactant>
    <organismsDiffer>false</organismsDiffer>
    <experiments>3</experiments>
</comment>
<comment type="interaction">
    <interactant intactId="EBI-12235840">
        <id>Q8NCX0-3</id>
    </interactant>
    <interactant intactId="EBI-769261">
        <id>Q96JC9</id>
        <label>EAF1</label>
    </interactant>
    <organismsDiffer>false</organismsDiffer>
    <experiments>3</experiments>
</comment>
<comment type="interaction">
    <interactant intactId="EBI-12235840">
        <id>Q8NCX0-3</id>
    </interactant>
    <interactant intactId="EBI-618309">
        <id>Q08379</id>
        <label>GOLGA2</label>
    </interactant>
    <organismsDiffer>false</organismsDiffer>
    <experiments>3</experiments>
</comment>
<comment type="interaction">
    <interactant intactId="EBI-12235840">
        <id>Q8NCX0-3</id>
    </interactant>
    <interactant intactId="EBI-591778">
        <id>P61970</id>
        <label>NUTF2</label>
    </interactant>
    <organismsDiffer>false</organismsDiffer>
    <experiments>3</experiments>
</comment>
<comment type="interaction">
    <interactant intactId="EBI-12235840">
        <id>Q8NCX0-3</id>
    </interactant>
    <interactant intactId="EBI-2798416">
        <id>Q99633</id>
        <label>PRPF18</label>
    </interactant>
    <organismsDiffer>false</organismsDiffer>
    <experiments>3</experiments>
</comment>
<comment type="interaction">
    <interactant intactId="EBI-12235840">
        <id>Q8NCX0-3</id>
    </interactant>
    <interactant intactId="EBI-357828">
        <id>P28074</id>
        <label>PSMB5</label>
    </interactant>
    <organismsDiffer>false</organismsDiffer>
    <experiments>3</experiments>
</comment>
<comment type="alternative products">
    <event type="alternative splicing"/>
    <isoform>
        <id>Q8NCX0-1</id>
        <name>1</name>
        <sequence type="displayed"/>
    </isoform>
    <isoform>
        <id>Q8NCX0-2</id>
        <name>2</name>
        <sequence type="described" ref="VSP_032873 VSP_032874 VSP_032877 VSP_032878"/>
    </isoform>
    <isoform>
        <id>Q8NCX0-3</id>
        <name>3</name>
        <sequence type="described" ref="VSP_032872 VSP_032877 VSP_032878"/>
    </isoform>
    <isoform>
        <id>Q8NCX0-4</id>
        <name>4</name>
        <sequence type="described" ref="VSP_032872 VSP_032875 VSP_032876"/>
    </isoform>
</comment>
<comment type="sequence caution" evidence="6">
    <conflict type="miscellaneous discrepancy">
        <sequence resource="EMBL-CDS" id="AAH62658"/>
    </conflict>
    <text>Contaminating sequence. Potential poly-A sequence.</text>
</comment>
<gene>
    <name type="primary">CCDC150</name>
</gene>
<dbReference type="EMBL" id="AK096130">
    <property type="protein sequence ID" value="BAC04706.1"/>
    <property type="molecule type" value="mRNA"/>
</dbReference>
<dbReference type="EMBL" id="AL834537">
    <property type="protein sequence ID" value="CAD39193.1"/>
    <property type="molecule type" value="mRNA"/>
</dbReference>
<dbReference type="EMBL" id="AC068544">
    <property type="protein sequence ID" value="AAY14905.1"/>
    <property type="molecule type" value="Genomic_DNA"/>
</dbReference>
<dbReference type="EMBL" id="CH471063">
    <property type="protein sequence ID" value="EAW70131.1"/>
    <property type="molecule type" value="Genomic_DNA"/>
</dbReference>
<dbReference type="EMBL" id="BC062449">
    <property type="protein sequence ID" value="AAH62449.1"/>
    <property type="molecule type" value="mRNA"/>
</dbReference>
<dbReference type="EMBL" id="BC062658">
    <property type="protein sequence ID" value="AAH62658.1"/>
    <property type="status" value="ALT_SEQ"/>
    <property type="molecule type" value="mRNA"/>
</dbReference>
<dbReference type="CCDS" id="CCDS46478.1">
    <molecule id="Q8NCX0-1"/>
</dbReference>
<dbReference type="RefSeq" id="NP_001074008.1">
    <molecule id="Q8NCX0-1"/>
    <property type="nucleotide sequence ID" value="NM_001080539.2"/>
</dbReference>
<dbReference type="SMR" id="Q8NCX0"/>
<dbReference type="BioGRID" id="129990">
    <property type="interactions" value="12"/>
</dbReference>
<dbReference type="FunCoup" id="Q8NCX0">
    <property type="interactions" value="148"/>
</dbReference>
<dbReference type="IntAct" id="Q8NCX0">
    <property type="interactions" value="7"/>
</dbReference>
<dbReference type="STRING" id="9606.ENSP00000373827"/>
<dbReference type="CarbonylDB" id="Q8NCX0"/>
<dbReference type="iPTMnet" id="Q8NCX0"/>
<dbReference type="PhosphoSitePlus" id="Q8NCX0"/>
<dbReference type="BioMuta" id="CCDC150"/>
<dbReference type="DMDM" id="182705170"/>
<dbReference type="jPOST" id="Q8NCX0"/>
<dbReference type="MassIVE" id="Q8NCX0"/>
<dbReference type="PaxDb" id="9606-ENSP00000373827"/>
<dbReference type="PeptideAtlas" id="Q8NCX0"/>
<dbReference type="ProteomicsDB" id="72962">
    <molecule id="Q8NCX0-1"/>
</dbReference>
<dbReference type="ProteomicsDB" id="72963">
    <molecule id="Q8NCX0-2"/>
</dbReference>
<dbReference type="ProteomicsDB" id="72964">
    <molecule id="Q8NCX0-3"/>
</dbReference>
<dbReference type="ProteomicsDB" id="72965">
    <molecule id="Q8NCX0-4"/>
</dbReference>
<dbReference type="Antibodypedia" id="67231">
    <property type="antibodies" value="29 antibodies from 8 providers"/>
</dbReference>
<dbReference type="DNASU" id="284992"/>
<dbReference type="Ensembl" id="ENST00000389175.9">
    <molecule id="Q8NCX0-1"/>
    <property type="protein sequence ID" value="ENSP00000373827.4"/>
    <property type="gene ID" value="ENSG00000144395.18"/>
</dbReference>
<dbReference type="Ensembl" id="ENST00000448409.5">
    <molecule id="Q8NCX0-2"/>
    <property type="protein sequence ID" value="ENSP00000413957.1"/>
    <property type="gene ID" value="ENSG00000144395.18"/>
</dbReference>
<dbReference type="GeneID" id="284992"/>
<dbReference type="KEGG" id="hsa:284992"/>
<dbReference type="MANE-Select" id="ENST00000389175.9">
    <property type="protein sequence ID" value="ENSP00000373827.4"/>
    <property type="RefSeq nucleotide sequence ID" value="NM_001080539.2"/>
    <property type="RefSeq protein sequence ID" value="NP_001074008.1"/>
</dbReference>
<dbReference type="UCSC" id="uc002utp.1">
    <molecule id="Q8NCX0-1"/>
    <property type="organism name" value="human"/>
</dbReference>
<dbReference type="AGR" id="HGNC:26834"/>
<dbReference type="CTD" id="284992"/>
<dbReference type="DisGeNET" id="284992"/>
<dbReference type="GeneCards" id="CCDC150"/>
<dbReference type="HGNC" id="HGNC:26834">
    <property type="gene designation" value="CCDC150"/>
</dbReference>
<dbReference type="HPA" id="ENSG00000144395">
    <property type="expression patterns" value="Tissue enhanced (kidney, testis)"/>
</dbReference>
<dbReference type="neXtProt" id="NX_Q8NCX0"/>
<dbReference type="OpenTargets" id="ENSG00000144395"/>
<dbReference type="PharmGKB" id="PA162381583"/>
<dbReference type="VEuPathDB" id="HostDB:ENSG00000144395"/>
<dbReference type="eggNOG" id="ENOG502QRGC">
    <property type="taxonomic scope" value="Eukaryota"/>
</dbReference>
<dbReference type="GeneTree" id="ENSGT00390000005285"/>
<dbReference type="HOGENOM" id="CLU_004802_0_0_1"/>
<dbReference type="InParanoid" id="Q8NCX0"/>
<dbReference type="OMA" id="TCRYNPG"/>
<dbReference type="OrthoDB" id="416454at2759"/>
<dbReference type="PAN-GO" id="Q8NCX0">
    <property type="GO annotations" value="0 GO annotations based on evolutionary models"/>
</dbReference>
<dbReference type="PhylomeDB" id="Q8NCX0"/>
<dbReference type="TreeFam" id="TF338017"/>
<dbReference type="PathwayCommons" id="Q8NCX0"/>
<dbReference type="SignaLink" id="Q8NCX0"/>
<dbReference type="BioGRID-ORCS" id="284992">
    <property type="hits" value="11 hits in 1166 CRISPR screens"/>
</dbReference>
<dbReference type="ChiTaRS" id="CCDC150">
    <property type="organism name" value="human"/>
</dbReference>
<dbReference type="GenomeRNAi" id="284992"/>
<dbReference type="Pharos" id="Q8NCX0">
    <property type="development level" value="Tdark"/>
</dbReference>
<dbReference type="PRO" id="PR:Q8NCX0"/>
<dbReference type="Proteomes" id="UP000005640">
    <property type="component" value="Chromosome 2"/>
</dbReference>
<dbReference type="RNAct" id="Q8NCX0">
    <property type="molecule type" value="protein"/>
</dbReference>
<dbReference type="Bgee" id="ENSG00000144395">
    <property type="expression patterns" value="Expressed in buccal mucosa cell and 103 other cell types or tissues"/>
</dbReference>
<dbReference type="ExpressionAtlas" id="Q8NCX0">
    <property type="expression patterns" value="baseline and differential"/>
</dbReference>
<dbReference type="InterPro" id="IPR038807">
    <property type="entry name" value="CCDC150"/>
</dbReference>
<dbReference type="PANTHER" id="PTHR35352">
    <property type="entry name" value="COILED-COIL DOMAIN-CONTAINING PROTEIN 150"/>
    <property type="match status" value="1"/>
</dbReference>
<dbReference type="PANTHER" id="PTHR35352:SF1">
    <property type="entry name" value="COILED-COIL DOMAIN-CONTAINING PROTEIN 150"/>
    <property type="match status" value="1"/>
</dbReference>